<accession>B4F0E9</accession>
<sequence length="457" mass="49141">MSNSAKSVVILAAGKGTRMYSQLPKVLHKLAGKSMVQHVIDTAKSLGAQQTHLVYGHGGELMKETLGSQPVNWVLQAEQLGTGHAMQQAAPFFADDEDILMLYGDVPLITKETLERLIAVKPAGGIGLLTVILDNPMGYGRIVRENGDVVGIVEQKDASEEQLKIKEINTGILVANGGDLKRWLAKLDNNNAQKEYYITDIIALAHQEGRKIETAHPTRHSEMEGVNNRLQLAALERIYQTEQAERLLLEGVMLLDPARFDLRGTLTHGKDVVIDTNVIIEGEVTLGNNVEIGTGCVLKNCVIGDGSIISPYTVIEDANLAQECTVGPFARLRPGAQLADKAHVGNFVEMKKASLGVGSKAGHLTYLGDTEVGANVNIGAGTITCNYDGANKFKTIIGDDVFIGSDTQLVAPVCVANGATIGAGTTLTKDVNENELVISRVKQTHISGWKRPVKKKQ</sequence>
<dbReference type="EC" id="2.7.7.23" evidence="1"/>
<dbReference type="EC" id="2.3.1.157" evidence="1"/>
<dbReference type="EMBL" id="AM942759">
    <property type="protein sequence ID" value="CAR46028.1"/>
    <property type="molecule type" value="Genomic_DNA"/>
</dbReference>
<dbReference type="RefSeq" id="WP_004246587.1">
    <property type="nucleotide sequence ID" value="NC_010554.1"/>
</dbReference>
<dbReference type="SMR" id="B4F0E9"/>
<dbReference type="EnsemblBacteria" id="CAR46028">
    <property type="protein sequence ID" value="CAR46028"/>
    <property type="gene ID" value="PMI3066"/>
</dbReference>
<dbReference type="GeneID" id="6800045"/>
<dbReference type="KEGG" id="pmr:PMI3066"/>
<dbReference type="eggNOG" id="COG1207">
    <property type="taxonomic scope" value="Bacteria"/>
</dbReference>
<dbReference type="HOGENOM" id="CLU_029499_15_2_6"/>
<dbReference type="UniPathway" id="UPA00113">
    <property type="reaction ID" value="UER00532"/>
</dbReference>
<dbReference type="UniPathway" id="UPA00113">
    <property type="reaction ID" value="UER00533"/>
</dbReference>
<dbReference type="UniPathway" id="UPA00973"/>
<dbReference type="Proteomes" id="UP000008319">
    <property type="component" value="Chromosome"/>
</dbReference>
<dbReference type="GO" id="GO:0005737">
    <property type="term" value="C:cytoplasm"/>
    <property type="evidence" value="ECO:0007669"/>
    <property type="project" value="UniProtKB-SubCell"/>
</dbReference>
<dbReference type="GO" id="GO:0016020">
    <property type="term" value="C:membrane"/>
    <property type="evidence" value="ECO:0007669"/>
    <property type="project" value="GOC"/>
</dbReference>
<dbReference type="GO" id="GO:0019134">
    <property type="term" value="F:glucosamine-1-phosphate N-acetyltransferase activity"/>
    <property type="evidence" value="ECO:0007669"/>
    <property type="project" value="UniProtKB-UniRule"/>
</dbReference>
<dbReference type="GO" id="GO:0000287">
    <property type="term" value="F:magnesium ion binding"/>
    <property type="evidence" value="ECO:0007669"/>
    <property type="project" value="UniProtKB-UniRule"/>
</dbReference>
<dbReference type="GO" id="GO:0003977">
    <property type="term" value="F:UDP-N-acetylglucosamine diphosphorylase activity"/>
    <property type="evidence" value="ECO:0007669"/>
    <property type="project" value="UniProtKB-UniRule"/>
</dbReference>
<dbReference type="GO" id="GO:0000902">
    <property type="term" value="P:cell morphogenesis"/>
    <property type="evidence" value="ECO:0007669"/>
    <property type="project" value="UniProtKB-UniRule"/>
</dbReference>
<dbReference type="GO" id="GO:0071555">
    <property type="term" value="P:cell wall organization"/>
    <property type="evidence" value="ECO:0007669"/>
    <property type="project" value="UniProtKB-KW"/>
</dbReference>
<dbReference type="GO" id="GO:0009245">
    <property type="term" value="P:lipid A biosynthetic process"/>
    <property type="evidence" value="ECO:0007669"/>
    <property type="project" value="UniProtKB-UniRule"/>
</dbReference>
<dbReference type="GO" id="GO:0009252">
    <property type="term" value="P:peptidoglycan biosynthetic process"/>
    <property type="evidence" value="ECO:0007669"/>
    <property type="project" value="UniProtKB-UniRule"/>
</dbReference>
<dbReference type="GO" id="GO:0008360">
    <property type="term" value="P:regulation of cell shape"/>
    <property type="evidence" value="ECO:0007669"/>
    <property type="project" value="UniProtKB-KW"/>
</dbReference>
<dbReference type="GO" id="GO:0006048">
    <property type="term" value="P:UDP-N-acetylglucosamine biosynthetic process"/>
    <property type="evidence" value="ECO:0007669"/>
    <property type="project" value="UniProtKB-UniPathway"/>
</dbReference>
<dbReference type="CDD" id="cd02540">
    <property type="entry name" value="GT2_GlmU_N_bac"/>
    <property type="match status" value="1"/>
</dbReference>
<dbReference type="CDD" id="cd03353">
    <property type="entry name" value="LbH_GlmU_C"/>
    <property type="match status" value="1"/>
</dbReference>
<dbReference type="FunFam" id="2.160.10.10:FF:000011">
    <property type="entry name" value="Bifunctional protein GlmU"/>
    <property type="match status" value="1"/>
</dbReference>
<dbReference type="FunFam" id="3.90.550.10:FF:000006">
    <property type="entry name" value="Bifunctional protein GlmU"/>
    <property type="match status" value="1"/>
</dbReference>
<dbReference type="Gene3D" id="2.160.10.10">
    <property type="entry name" value="Hexapeptide repeat proteins"/>
    <property type="match status" value="1"/>
</dbReference>
<dbReference type="Gene3D" id="3.90.550.10">
    <property type="entry name" value="Spore Coat Polysaccharide Biosynthesis Protein SpsA, Chain A"/>
    <property type="match status" value="1"/>
</dbReference>
<dbReference type="HAMAP" id="MF_01631">
    <property type="entry name" value="GlmU"/>
    <property type="match status" value="1"/>
</dbReference>
<dbReference type="InterPro" id="IPR005882">
    <property type="entry name" value="Bifunctional_GlmU"/>
</dbReference>
<dbReference type="InterPro" id="IPR050065">
    <property type="entry name" value="GlmU-like"/>
</dbReference>
<dbReference type="InterPro" id="IPR038009">
    <property type="entry name" value="GlmU_C_LbH"/>
</dbReference>
<dbReference type="InterPro" id="IPR001451">
    <property type="entry name" value="Hexapep"/>
</dbReference>
<dbReference type="InterPro" id="IPR018357">
    <property type="entry name" value="Hexapep_transf_CS"/>
</dbReference>
<dbReference type="InterPro" id="IPR025877">
    <property type="entry name" value="MobA-like_NTP_Trfase"/>
</dbReference>
<dbReference type="InterPro" id="IPR029044">
    <property type="entry name" value="Nucleotide-diphossugar_trans"/>
</dbReference>
<dbReference type="InterPro" id="IPR011004">
    <property type="entry name" value="Trimer_LpxA-like_sf"/>
</dbReference>
<dbReference type="NCBIfam" id="TIGR01173">
    <property type="entry name" value="glmU"/>
    <property type="match status" value="1"/>
</dbReference>
<dbReference type="NCBIfam" id="NF006986">
    <property type="entry name" value="PRK09451.1"/>
    <property type="match status" value="1"/>
</dbReference>
<dbReference type="PANTHER" id="PTHR43584:SF3">
    <property type="entry name" value="BIFUNCTIONAL PROTEIN GLMU"/>
    <property type="match status" value="1"/>
</dbReference>
<dbReference type="PANTHER" id="PTHR43584">
    <property type="entry name" value="NUCLEOTIDYL TRANSFERASE"/>
    <property type="match status" value="1"/>
</dbReference>
<dbReference type="Pfam" id="PF00132">
    <property type="entry name" value="Hexapep"/>
    <property type="match status" value="1"/>
</dbReference>
<dbReference type="Pfam" id="PF12804">
    <property type="entry name" value="NTP_transf_3"/>
    <property type="match status" value="1"/>
</dbReference>
<dbReference type="SUPFAM" id="SSF53448">
    <property type="entry name" value="Nucleotide-diphospho-sugar transferases"/>
    <property type="match status" value="1"/>
</dbReference>
<dbReference type="SUPFAM" id="SSF51161">
    <property type="entry name" value="Trimeric LpxA-like enzymes"/>
    <property type="match status" value="1"/>
</dbReference>
<dbReference type="PROSITE" id="PS00101">
    <property type="entry name" value="HEXAPEP_TRANSFERASES"/>
    <property type="match status" value="1"/>
</dbReference>
<evidence type="ECO:0000255" key="1">
    <source>
        <dbReference type="HAMAP-Rule" id="MF_01631"/>
    </source>
</evidence>
<reference key="1">
    <citation type="journal article" date="2008" name="J. Bacteriol.">
        <title>Complete genome sequence of uropathogenic Proteus mirabilis, a master of both adherence and motility.</title>
        <authorList>
            <person name="Pearson M.M."/>
            <person name="Sebaihia M."/>
            <person name="Churcher C."/>
            <person name="Quail M.A."/>
            <person name="Seshasayee A.S."/>
            <person name="Luscombe N.M."/>
            <person name="Abdellah Z."/>
            <person name="Arrosmith C."/>
            <person name="Atkin B."/>
            <person name="Chillingworth T."/>
            <person name="Hauser H."/>
            <person name="Jagels K."/>
            <person name="Moule S."/>
            <person name="Mungall K."/>
            <person name="Norbertczak H."/>
            <person name="Rabbinowitsch E."/>
            <person name="Walker D."/>
            <person name="Whithead S."/>
            <person name="Thomson N.R."/>
            <person name="Rather P.N."/>
            <person name="Parkhill J."/>
            <person name="Mobley H.L.T."/>
        </authorList>
    </citation>
    <scope>NUCLEOTIDE SEQUENCE [LARGE SCALE GENOMIC DNA]</scope>
    <source>
        <strain>HI4320</strain>
    </source>
</reference>
<gene>
    <name evidence="1" type="primary">glmU</name>
    <name type="ordered locus">PMI3066</name>
</gene>
<comment type="function">
    <text evidence="1">Catalyzes the last two sequential reactions in the de novo biosynthetic pathway for UDP-N-acetylglucosamine (UDP-GlcNAc). The C-terminal domain catalyzes the transfer of acetyl group from acetyl coenzyme A to glucosamine-1-phosphate (GlcN-1-P) to produce N-acetylglucosamine-1-phosphate (GlcNAc-1-P), which is converted into UDP-GlcNAc by the transfer of uridine 5-monophosphate (from uridine 5-triphosphate), a reaction catalyzed by the N-terminal domain.</text>
</comment>
<comment type="catalytic activity">
    <reaction evidence="1">
        <text>alpha-D-glucosamine 1-phosphate + acetyl-CoA = N-acetyl-alpha-D-glucosamine 1-phosphate + CoA + H(+)</text>
        <dbReference type="Rhea" id="RHEA:13725"/>
        <dbReference type="ChEBI" id="CHEBI:15378"/>
        <dbReference type="ChEBI" id="CHEBI:57287"/>
        <dbReference type="ChEBI" id="CHEBI:57288"/>
        <dbReference type="ChEBI" id="CHEBI:57776"/>
        <dbReference type="ChEBI" id="CHEBI:58516"/>
        <dbReference type="EC" id="2.3.1.157"/>
    </reaction>
</comment>
<comment type="catalytic activity">
    <reaction evidence="1">
        <text>N-acetyl-alpha-D-glucosamine 1-phosphate + UTP + H(+) = UDP-N-acetyl-alpha-D-glucosamine + diphosphate</text>
        <dbReference type="Rhea" id="RHEA:13509"/>
        <dbReference type="ChEBI" id="CHEBI:15378"/>
        <dbReference type="ChEBI" id="CHEBI:33019"/>
        <dbReference type="ChEBI" id="CHEBI:46398"/>
        <dbReference type="ChEBI" id="CHEBI:57705"/>
        <dbReference type="ChEBI" id="CHEBI:57776"/>
        <dbReference type="EC" id="2.7.7.23"/>
    </reaction>
</comment>
<comment type="cofactor">
    <cofactor evidence="1">
        <name>Mg(2+)</name>
        <dbReference type="ChEBI" id="CHEBI:18420"/>
    </cofactor>
    <text evidence="1">Binds 1 Mg(2+) ion per subunit.</text>
</comment>
<comment type="pathway">
    <text evidence="1">Nucleotide-sugar biosynthesis; UDP-N-acetyl-alpha-D-glucosamine biosynthesis; N-acetyl-alpha-D-glucosamine 1-phosphate from alpha-D-glucosamine 6-phosphate (route II): step 2/2.</text>
</comment>
<comment type="pathway">
    <text evidence="1">Nucleotide-sugar biosynthesis; UDP-N-acetyl-alpha-D-glucosamine biosynthesis; UDP-N-acetyl-alpha-D-glucosamine from N-acetyl-alpha-D-glucosamine 1-phosphate: step 1/1.</text>
</comment>
<comment type="pathway">
    <text evidence="1">Bacterial outer membrane biogenesis; LPS lipid A biosynthesis.</text>
</comment>
<comment type="subunit">
    <text evidence="1">Homotrimer.</text>
</comment>
<comment type="subcellular location">
    <subcellularLocation>
        <location evidence="1">Cytoplasm</location>
    </subcellularLocation>
</comment>
<comment type="similarity">
    <text evidence="1">In the N-terminal section; belongs to the N-acetylglucosamine-1-phosphate uridyltransferase family.</text>
</comment>
<comment type="similarity">
    <text evidence="1">In the C-terminal section; belongs to the transferase hexapeptide repeat family.</text>
</comment>
<organism>
    <name type="scientific">Proteus mirabilis (strain HI4320)</name>
    <dbReference type="NCBI Taxonomy" id="529507"/>
    <lineage>
        <taxon>Bacteria</taxon>
        <taxon>Pseudomonadati</taxon>
        <taxon>Pseudomonadota</taxon>
        <taxon>Gammaproteobacteria</taxon>
        <taxon>Enterobacterales</taxon>
        <taxon>Morganellaceae</taxon>
        <taxon>Proteus</taxon>
    </lineage>
</organism>
<feature type="chain" id="PRO_1000186472" description="Bifunctional protein GlmU">
    <location>
        <begin position="1"/>
        <end position="457"/>
    </location>
</feature>
<feature type="region of interest" description="Pyrophosphorylase" evidence="1">
    <location>
        <begin position="1"/>
        <end position="229"/>
    </location>
</feature>
<feature type="region of interest" description="Linker" evidence="1">
    <location>
        <begin position="230"/>
        <end position="250"/>
    </location>
</feature>
<feature type="region of interest" description="N-acetyltransferase" evidence="1">
    <location>
        <begin position="251"/>
        <end position="457"/>
    </location>
</feature>
<feature type="active site" description="Proton acceptor" evidence="1">
    <location>
        <position position="363"/>
    </location>
</feature>
<feature type="binding site" evidence="1">
    <location>
        <begin position="11"/>
        <end position="14"/>
    </location>
    <ligand>
        <name>UDP-N-acetyl-alpha-D-glucosamine</name>
        <dbReference type="ChEBI" id="CHEBI:57705"/>
    </ligand>
</feature>
<feature type="binding site" evidence="1">
    <location>
        <position position="25"/>
    </location>
    <ligand>
        <name>UDP-N-acetyl-alpha-D-glucosamine</name>
        <dbReference type="ChEBI" id="CHEBI:57705"/>
    </ligand>
</feature>
<feature type="binding site" evidence="1">
    <location>
        <position position="76"/>
    </location>
    <ligand>
        <name>UDP-N-acetyl-alpha-D-glucosamine</name>
        <dbReference type="ChEBI" id="CHEBI:57705"/>
    </ligand>
</feature>
<feature type="binding site" evidence="1">
    <location>
        <begin position="81"/>
        <end position="82"/>
    </location>
    <ligand>
        <name>UDP-N-acetyl-alpha-D-glucosamine</name>
        <dbReference type="ChEBI" id="CHEBI:57705"/>
    </ligand>
</feature>
<feature type="binding site" evidence="1">
    <location>
        <begin position="103"/>
        <end position="105"/>
    </location>
    <ligand>
        <name>UDP-N-acetyl-alpha-D-glucosamine</name>
        <dbReference type="ChEBI" id="CHEBI:57705"/>
    </ligand>
</feature>
<feature type="binding site" evidence="1">
    <location>
        <position position="105"/>
    </location>
    <ligand>
        <name>Mg(2+)</name>
        <dbReference type="ChEBI" id="CHEBI:18420"/>
    </ligand>
</feature>
<feature type="binding site" evidence="1">
    <location>
        <position position="140"/>
    </location>
    <ligand>
        <name>UDP-N-acetyl-alpha-D-glucosamine</name>
        <dbReference type="ChEBI" id="CHEBI:57705"/>
    </ligand>
</feature>
<feature type="binding site" evidence="1">
    <location>
        <position position="154"/>
    </location>
    <ligand>
        <name>UDP-N-acetyl-alpha-D-glucosamine</name>
        <dbReference type="ChEBI" id="CHEBI:57705"/>
    </ligand>
</feature>
<feature type="binding site" evidence="1">
    <location>
        <position position="169"/>
    </location>
    <ligand>
        <name>UDP-N-acetyl-alpha-D-glucosamine</name>
        <dbReference type="ChEBI" id="CHEBI:57705"/>
    </ligand>
</feature>
<feature type="binding site" evidence="1">
    <location>
        <position position="227"/>
    </location>
    <ligand>
        <name>Mg(2+)</name>
        <dbReference type="ChEBI" id="CHEBI:18420"/>
    </ligand>
</feature>
<feature type="binding site" evidence="1">
    <location>
        <position position="227"/>
    </location>
    <ligand>
        <name>UDP-N-acetyl-alpha-D-glucosamine</name>
        <dbReference type="ChEBI" id="CHEBI:57705"/>
    </ligand>
</feature>
<feature type="binding site" evidence="1">
    <location>
        <position position="333"/>
    </location>
    <ligand>
        <name>UDP-N-acetyl-alpha-D-glucosamine</name>
        <dbReference type="ChEBI" id="CHEBI:57705"/>
    </ligand>
</feature>
<feature type="binding site" evidence="1">
    <location>
        <position position="351"/>
    </location>
    <ligand>
        <name>UDP-N-acetyl-alpha-D-glucosamine</name>
        <dbReference type="ChEBI" id="CHEBI:57705"/>
    </ligand>
</feature>
<feature type="binding site" evidence="1">
    <location>
        <position position="366"/>
    </location>
    <ligand>
        <name>UDP-N-acetyl-alpha-D-glucosamine</name>
        <dbReference type="ChEBI" id="CHEBI:57705"/>
    </ligand>
</feature>
<feature type="binding site" evidence="1">
    <location>
        <position position="377"/>
    </location>
    <ligand>
        <name>UDP-N-acetyl-alpha-D-glucosamine</name>
        <dbReference type="ChEBI" id="CHEBI:57705"/>
    </ligand>
</feature>
<feature type="binding site" evidence="1">
    <location>
        <position position="380"/>
    </location>
    <ligand>
        <name>acetyl-CoA</name>
        <dbReference type="ChEBI" id="CHEBI:57288"/>
    </ligand>
</feature>
<feature type="binding site" evidence="1">
    <location>
        <begin position="386"/>
        <end position="387"/>
    </location>
    <ligand>
        <name>acetyl-CoA</name>
        <dbReference type="ChEBI" id="CHEBI:57288"/>
    </ligand>
</feature>
<feature type="binding site" evidence="1">
    <location>
        <position position="405"/>
    </location>
    <ligand>
        <name>acetyl-CoA</name>
        <dbReference type="ChEBI" id="CHEBI:57288"/>
    </ligand>
</feature>
<feature type="binding site" evidence="1">
    <location>
        <position position="423"/>
    </location>
    <ligand>
        <name>acetyl-CoA</name>
        <dbReference type="ChEBI" id="CHEBI:57288"/>
    </ligand>
</feature>
<feature type="binding site" evidence="1">
    <location>
        <position position="440"/>
    </location>
    <ligand>
        <name>acetyl-CoA</name>
        <dbReference type="ChEBI" id="CHEBI:57288"/>
    </ligand>
</feature>
<name>GLMU_PROMH</name>
<keyword id="KW-0012">Acyltransferase</keyword>
<keyword id="KW-0133">Cell shape</keyword>
<keyword id="KW-0961">Cell wall biogenesis/degradation</keyword>
<keyword id="KW-0963">Cytoplasm</keyword>
<keyword id="KW-0460">Magnesium</keyword>
<keyword id="KW-0479">Metal-binding</keyword>
<keyword id="KW-0511">Multifunctional enzyme</keyword>
<keyword id="KW-0548">Nucleotidyltransferase</keyword>
<keyword id="KW-0573">Peptidoglycan synthesis</keyword>
<keyword id="KW-1185">Reference proteome</keyword>
<keyword id="KW-0677">Repeat</keyword>
<keyword id="KW-0808">Transferase</keyword>
<protein>
    <recommendedName>
        <fullName evidence="1">Bifunctional protein GlmU</fullName>
    </recommendedName>
    <domain>
        <recommendedName>
            <fullName evidence="1">UDP-N-acetylglucosamine pyrophosphorylase</fullName>
            <ecNumber evidence="1">2.7.7.23</ecNumber>
        </recommendedName>
        <alternativeName>
            <fullName evidence="1">N-acetylglucosamine-1-phosphate uridyltransferase</fullName>
        </alternativeName>
    </domain>
    <domain>
        <recommendedName>
            <fullName evidence="1">Glucosamine-1-phosphate N-acetyltransferase</fullName>
            <ecNumber evidence="1">2.3.1.157</ecNumber>
        </recommendedName>
    </domain>
</protein>
<proteinExistence type="inferred from homology"/>